<proteinExistence type="inferred from homology"/>
<name>NPC2_SCHPO</name>
<feature type="signal peptide" evidence="2">
    <location>
        <begin position="1"/>
        <end position="19"/>
    </location>
</feature>
<feature type="propeptide" id="PRO_0000019891" evidence="1">
    <location>
        <begin position="20"/>
        <end position="40"/>
    </location>
</feature>
<feature type="chain" id="PRO_0000019892" description="Phosphatidylglycerol/phosphatidylinositol transfer protein">
    <location>
        <begin position="41"/>
        <end position="188"/>
    </location>
</feature>
<accession>Q9C0X9</accession>
<protein>
    <recommendedName>
        <fullName>Phosphatidylglycerol/phosphatidylinositol transfer protein</fullName>
        <shortName>PG/PI-TP</shortName>
    </recommendedName>
</protein>
<comment type="function">
    <text evidence="1">Catalyzes the intermembrane transfer of phosphatidylglycerol and phosphatidylinositol.</text>
</comment>
<comment type="subunit">
    <text evidence="1">Monomer.</text>
</comment>
<comment type="similarity">
    <text evidence="3">Belongs to the NPC2 family.</text>
</comment>
<organism>
    <name type="scientific">Schizosaccharomyces pombe (strain 972 / ATCC 24843)</name>
    <name type="common">Fission yeast</name>
    <dbReference type="NCBI Taxonomy" id="284812"/>
    <lineage>
        <taxon>Eukaryota</taxon>
        <taxon>Fungi</taxon>
        <taxon>Dikarya</taxon>
        <taxon>Ascomycota</taxon>
        <taxon>Taphrinomycotina</taxon>
        <taxon>Schizosaccharomycetes</taxon>
        <taxon>Schizosaccharomycetales</taxon>
        <taxon>Schizosaccharomycetaceae</taxon>
        <taxon>Schizosaccharomyces</taxon>
    </lineage>
</organism>
<reference key="1">
    <citation type="journal article" date="2002" name="Nature">
        <title>The genome sequence of Schizosaccharomyces pombe.</title>
        <authorList>
            <person name="Wood V."/>
            <person name="Gwilliam R."/>
            <person name="Rajandream M.A."/>
            <person name="Lyne M.H."/>
            <person name="Lyne R."/>
            <person name="Stewart A."/>
            <person name="Sgouros J.G."/>
            <person name="Peat N."/>
            <person name="Hayles J."/>
            <person name="Baker S.G."/>
            <person name="Basham D."/>
            <person name="Bowman S."/>
            <person name="Brooks K."/>
            <person name="Brown D."/>
            <person name="Brown S."/>
            <person name="Chillingworth T."/>
            <person name="Churcher C.M."/>
            <person name="Collins M."/>
            <person name="Connor R."/>
            <person name="Cronin A."/>
            <person name="Davis P."/>
            <person name="Feltwell T."/>
            <person name="Fraser A."/>
            <person name="Gentles S."/>
            <person name="Goble A."/>
            <person name="Hamlin N."/>
            <person name="Harris D.E."/>
            <person name="Hidalgo J."/>
            <person name="Hodgson G."/>
            <person name="Holroyd S."/>
            <person name="Hornsby T."/>
            <person name="Howarth S."/>
            <person name="Huckle E.J."/>
            <person name="Hunt S."/>
            <person name="Jagels K."/>
            <person name="James K.D."/>
            <person name="Jones L."/>
            <person name="Jones M."/>
            <person name="Leather S."/>
            <person name="McDonald S."/>
            <person name="McLean J."/>
            <person name="Mooney P."/>
            <person name="Moule S."/>
            <person name="Mungall K.L."/>
            <person name="Murphy L.D."/>
            <person name="Niblett D."/>
            <person name="Odell C."/>
            <person name="Oliver K."/>
            <person name="O'Neil S."/>
            <person name="Pearson D."/>
            <person name="Quail M.A."/>
            <person name="Rabbinowitsch E."/>
            <person name="Rutherford K.M."/>
            <person name="Rutter S."/>
            <person name="Saunders D."/>
            <person name="Seeger K."/>
            <person name="Sharp S."/>
            <person name="Skelton J."/>
            <person name="Simmonds M.N."/>
            <person name="Squares R."/>
            <person name="Squares S."/>
            <person name="Stevens K."/>
            <person name="Taylor K."/>
            <person name="Taylor R.G."/>
            <person name="Tivey A."/>
            <person name="Walsh S.V."/>
            <person name="Warren T."/>
            <person name="Whitehead S."/>
            <person name="Woodward J.R."/>
            <person name="Volckaert G."/>
            <person name="Aert R."/>
            <person name="Robben J."/>
            <person name="Grymonprez B."/>
            <person name="Weltjens I."/>
            <person name="Vanstreels E."/>
            <person name="Rieger M."/>
            <person name="Schaefer M."/>
            <person name="Mueller-Auer S."/>
            <person name="Gabel C."/>
            <person name="Fuchs M."/>
            <person name="Duesterhoeft A."/>
            <person name="Fritzc C."/>
            <person name="Holzer E."/>
            <person name="Moestl D."/>
            <person name="Hilbert H."/>
            <person name="Borzym K."/>
            <person name="Langer I."/>
            <person name="Beck A."/>
            <person name="Lehrach H."/>
            <person name="Reinhardt R."/>
            <person name="Pohl T.M."/>
            <person name="Eger P."/>
            <person name="Zimmermann W."/>
            <person name="Wedler H."/>
            <person name="Wambutt R."/>
            <person name="Purnelle B."/>
            <person name="Goffeau A."/>
            <person name="Cadieu E."/>
            <person name="Dreano S."/>
            <person name="Gloux S."/>
            <person name="Lelaure V."/>
            <person name="Mottier S."/>
            <person name="Galibert F."/>
            <person name="Aves S.J."/>
            <person name="Xiang Z."/>
            <person name="Hunt C."/>
            <person name="Moore K."/>
            <person name="Hurst S.M."/>
            <person name="Lucas M."/>
            <person name="Rochet M."/>
            <person name="Gaillardin C."/>
            <person name="Tallada V.A."/>
            <person name="Garzon A."/>
            <person name="Thode G."/>
            <person name="Daga R.R."/>
            <person name="Cruzado L."/>
            <person name="Jimenez J."/>
            <person name="Sanchez M."/>
            <person name="del Rey F."/>
            <person name="Benito J."/>
            <person name="Dominguez A."/>
            <person name="Revuelta J.L."/>
            <person name="Moreno S."/>
            <person name="Armstrong J."/>
            <person name="Forsburg S.L."/>
            <person name="Cerutti L."/>
            <person name="Lowe T."/>
            <person name="McCombie W.R."/>
            <person name="Paulsen I."/>
            <person name="Potashkin J."/>
            <person name="Shpakovski G.V."/>
            <person name="Ussery D."/>
            <person name="Barrell B.G."/>
            <person name="Nurse P."/>
        </authorList>
    </citation>
    <scope>NUCLEOTIDE SEQUENCE [LARGE SCALE GENOMIC DNA]</scope>
    <source>
        <strain>972 / ATCC 24843</strain>
    </source>
</reference>
<dbReference type="EMBL" id="CU329670">
    <property type="protein sequence ID" value="CAC37423.1"/>
    <property type="molecule type" value="Genomic_DNA"/>
</dbReference>
<dbReference type="RefSeq" id="NP_594778.1">
    <property type="nucleotide sequence ID" value="NM_001020206.2"/>
</dbReference>
<dbReference type="SMR" id="Q9C0X9"/>
<dbReference type="BioGRID" id="279755">
    <property type="interactions" value="16"/>
</dbReference>
<dbReference type="FunCoup" id="Q9C0X9">
    <property type="interactions" value="1"/>
</dbReference>
<dbReference type="STRING" id="284812.Q9C0X9"/>
<dbReference type="iPTMnet" id="Q9C0X9"/>
<dbReference type="PaxDb" id="4896-SPAPB8E5.04c.1"/>
<dbReference type="EnsemblFungi" id="SPAPB8E5.04c.1">
    <property type="protein sequence ID" value="SPAPB8E5.04c.1:pep"/>
    <property type="gene ID" value="SPAPB8E5.04c"/>
</dbReference>
<dbReference type="GeneID" id="2543332"/>
<dbReference type="KEGG" id="spo:2543332"/>
<dbReference type="PomBase" id="SPAPB8E5.04c">
    <property type="gene designation" value="npc2"/>
</dbReference>
<dbReference type="VEuPathDB" id="FungiDB:SPAPB8E5.04c"/>
<dbReference type="eggNOG" id="KOG4680">
    <property type="taxonomic scope" value="Eukaryota"/>
</dbReference>
<dbReference type="HOGENOM" id="CLU_097982_0_0_1"/>
<dbReference type="InParanoid" id="Q9C0X9"/>
<dbReference type="OMA" id="HQTYDLC"/>
<dbReference type="PhylomeDB" id="Q9C0X9"/>
<dbReference type="Reactome" id="R-SPO-6798695">
    <property type="pathway name" value="Neutrophil degranulation"/>
</dbReference>
<dbReference type="Reactome" id="R-SPO-8964038">
    <property type="pathway name" value="LDL clearance"/>
</dbReference>
<dbReference type="PRO" id="PR:Q9C0X9"/>
<dbReference type="Proteomes" id="UP000002485">
    <property type="component" value="Chromosome I"/>
</dbReference>
<dbReference type="GO" id="GO:0000328">
    <property type="term" value="C:fungal-type vacuole lumen"/>
    <property type="evidence" value="ECO:0000266"/>
    <property type="project" value="PomBase"/>
</dbReference>
<dbReference type="GO" id="GO:0032934">
    <property type="term" value="F:sterol binding"/>
    <property type="evidence" value="ECO:0000318"/>
    <property type="project" value="GO_Central"/>
</dbReference>
<dbReference type="GO" id="GO:0032366">
    <property type="term" value="P:intracellular sterol transport"/>
    <property type="evidence" value="ECO:0000266"/>
    <property type="project" value="PomBase"/>
</dbReference>
<dbReference type="GO" id="GO:0061024">
    <property type="term" value="P:membrane organization"/>
    <property type="evidence" value="ECO:0000305"/>
    <property type="project" value="PomBase"/>
</dbReference>
<dbReference type="GO" id="GO:0015918">
    <property type="term" value="P:sterol transport"/>
    <property type="evidence" value="ECO:0000318"/>
    <property type="project" value="GO_Central"/>
</dbReference>
<dbReference type="CDD" id="cd00917">
    <property type="entry name" value="PG-PI_TP"/>
    <property type="match status" value="1"/>
</dbReference>
<dbReference type="FunFam" id="2.60.40.770:FF:000004">
    <property type="entry name" value="Phosphatidylglycerol/phosphatidylinositol transfer protein"/>
    <property type="match status" value="1"/>
</dbReference>
<dbReference type="Gene3D" id="2.60.40.770">
    <property type="match status" value="1"/>
</dbReference>
<dbReference type="InterPro" id="IPR014756">
    <property type="entry name" value="Ig_E-set"/>
</dbReference>
<dbReference type="InterPro" id="IPR003172">
    <property type="entry name" value="ML_dom"/>
</dbReference>
<dbReference type="InterPro" id="IPR033917">
    <property type="entry name" value="ML_PG-PI_TP"/>
</dbReference>
<dbReference type="InterPro" id="IPR039670">
    <property type="entry name" value="NPC2-like"/>
</dbReference>
<dbReference type="PANTHER" id="PTHR11306">
    <property type="entry name" value="NIEMANN PICK TYPE C2 PROTEIN NPC2-RELATED"/>
    <property type="match status" value="1"/>
</dbReference>
<dbReference type="PANTHER" id="PTHR11306:SF0">
    <property type="entry name" value="PHOSPHATIDYLGLYCEROL_PHOSPHATIDYLINOSITOL TRANSFER PROTEIN"/>
    <property type="match status" value="1"/>
</dbReference>
<dbReference type="Pfam" id="PF02221">
    <property type="entry name" value="E1_DerP2_DerF2"/>
    <property type="match status" value="1"/>
</dbReference>
<dbReference type="SMART" id="SM00737">
    <property type="entry name" value="ML"/>
    <property type="match status" value="1"/>
</dbReference>
<dbReference type="SUPFAM" id="SSF81296">
    <property type="entry name" value="E set domains"/>
    <property type="match status" value="1"/>
</dbReference>
<evidence type="ECO:0000250" key="1"/>
<evidence type="ECO:0000255" key="2"/>
<evidence type="ECO:0000305" key="3"/>
<keyword id="KW-0445">Lipid transport</keyword>
<keyword id="KW-1185">Reference proteome</keyword>
<keyword id="KW-0732">Signal</keyword>
<keyword id="KW-0813">Transport</keyword>
<gene>
    <name type="primary">npc2</name>
    <name type="ORF">SPAPB8E5.04c</name>
</gene>
<sequence>MRLTTFIYAITCLPIFISASSWFSSFSFGESKSTDLVSSTSEKIPGANPASYCADWDRGDDHVVVDYINLIPNPPAAGKNLTIETEINVGTTVLNGSYVDIQVKYGFVRIVNERLDICDKAYELAAVECPVEPGIITKQATISLPWAIPPGRYHVLATAYNADGEQLTCVSASVSFSHFGFQLINQDH</sequence>